<comment type="function">
    <text evidence="2">RNA-dependent helicase required for nonsense-mediated decay (NMD) of aberrant mRNAs containing premature stop codons and modulates the expression level of normal mRNAs. The formation of a surveillance complex is believed to activate NMD.</text>
</comment>
<comment type="catalytic activity">
    <reaction evidence="2">
        <text>ATP + H2O = ADP + phosphate + H(+)</text>
        <dbReference type="Rhea" id="RHEA:13065"/>
        <dbReference type="ChEBI" id="CHEBI:15377"/>
        <dbReference type="ChEBI" id="CHEBI:15378"/>
        <dbReference type="ChEBI" id="CHEBI:30616"/>
        <dbReference type="ChEBI" id="CHEBI:43474"/>
        <dbReference type="ChEBI" id="CHEBI:456216"/>
        <dbReference type="EC" id="3.6.4.12"/>
    </reaction>
    <physiologicalReaction direction="left-to-right" evidence="2">
        <dbReference type="Rhea" id="RHEA:13066"/>
    </physiologicalReaction>
</comment>
<comment type="catalytic activity">
    <reaction evidence="2">
        <text>ATP + H2O = ADP + phosphate + H(+)</text>
        <dbReference type="Rhea" id="RHEA:13065"/>
        <dbReference type="ChEBI" id="CHEBI:15377"/>
        <dbReference type="ChEBI" id="CHEBI:15378"/>
        <dbReference type="ChEBI" id="CHEBI:30616"/>
        <dbReference type="ChEBI" id="CHEBI:43474"/>
        <dbReference type="ChEBI" id="CHEBI:456216"/>
        <dbReference type="EC" id="3.6.4.13"/>
    </reaction>
    <physiologicalReaction direction="left-to-right" evidence="2">
        <dbReference type="Rhea" id="RHEA:13066"/>
    </physiologicalReaction>
</comment>
<comment type="subcellular location">
    <subcellularLocation>
        <location evidence="1">Cytoplasm</location>
    </subcellularLocation>
</comment>
<comment type="domain">
    <text evidence="1">The [ST]-Q motif constitutes a recognition sequence for kinases from the PI3/PI4-kinase family.</text>
</comment>
<comment type="PTM">
    <text evidence="1">Phosphorylated probably by smg1.</text>
</comment>
<comment type="similarity">
    <text evidence="7">Belongs to the DNA2/NAM7 helicase family.</text>
</comment>
<keyword id="KW-0067">ATP-binding</keyword>
<keyword id="KW-0175">Coiled coil</keyword>
<keyword id="KW-0963">Cytoplasm</keyword>
<keyword id="KW-0347">Helicase</keyword>
<keyword id="KW-0378">Hydrolase</keyword>
<keyword id="KW-0479">Metal-binding</keyword>
<keyword id="KW-0866">Nonsense-mediated mRNA decay</keyword>
<keyword id="KW-0547">Nucleotide-binding</keyword>
<keyword id="KW-0597">Phosphoprotein</keyword>
<keyword id="KW-1185">Reference proteome</keyword>
<keyword id="KW-0677">Repeat</keyword>
<keyword id="KW-0862">Zinc</keyword>
<keyword id="KW-0863">Zinc-finger</keyword>
<name>RENT1_DICDI</name>
<organism>
    <name type="scientific">Dictyostelium discoideum</name>
    <name type="common">Social amoeba</name>
    <dbReference type="NCBI Taxonomy" id="44689"/>
    <lineage>
        <taxon>Eukaryota</taxon>
        <taxon>Amoebozoa</taxon>
        <taxon>Evosea</taxon>
        <taxon>Eumycetozoa</taxon>
        <taxon>Dictyostelia</taxon>
        <taxon>Dictyosteliales</taxon>
        <taxon>Dictyosteliaceae</taxon>
        <taxon>Dictyostelium</taxon>
    </lineage>
</organism>
<reference key="1">
    <citation type="journal article" date="2005" name="Nature">
        <title>The genome of the social amoeba Dictyostelium discoideum.</title>
        <authorList>
            <person name="Eichinger L."/>
            <person name="Pachebat J.A."/>
            <person name="Gloeckner G."/>
            <person name="Rajandream M.A."/>
            <person name="Sucgang R."/>
            <person name="Berriman M."/>
            <person name="Song J."/>
            <person name="Olsen R."/>
            <person name="Szafranski K."/>
            <person name="Xu Q."/>
            <person name="Tunggal B."/>
            <person name="Kummerfeld S."/>
            <person name="Madera M."/>
            <person name="Konfortov B.A."/>
            <person name="Rivero F."/>
            <person name="Bankier A.T."/>
            <person name="Lehmann R."/>
            <person name="Hamlin N."/>
            <person name="Davies R."/>
            <person name="Gaudet P."/>
            <person name="Fey P."/>
            <person name="Pilcher K."/>
            <person name="Chen G."/>
            <person name="Saunders D."/>
            <person name="Sodergren E.J."/>
            <person name="Davis P."/>
            <person name="Kerhornou A."/>
            <person name="Nie X."/>
            <person name="Hall N."/>
            <person name="Anjard C."/>
            <person name="Hemphill L."/>
            <person name="Bason N."/>
            <person name="Farbrother P."/>
            <person name="Desany B."/>
            <person name="Just E."/>
            <person name="Morio T."/>
            <person name="Rost R."/>
            <person name="Churcher C.M."/>
            <person name="Cooper J."/>
            <person name="Haydock S."/>
            <person name="van Driessche N."/>
            <person name="Cronin A."/>
            <person name="Goodhead I."/>
            <person name="Muzny D.M."/>
            <person name="Mourier T."/>
            <person name="Pain A."/>
            <person name="Lu M."/>
            <person name="Harper D."/>
            <person name="Lindsay R."/>
            <person name="Hauser H."/>
            <person name="James K.D."/>
            <person name="Quiles M."/>
            <person name="Madan Babu M."/>
            <person name="Saito T."/>
            <person name="Buchrieser C."/>
            <person name="Wardroper A."/>
            <person name="Felder M."/>
            <person name="Thangavelu M."/>
            <person name="Johnson D."/>
            <person name="Knights A."/>
            <person name="Loulseged H."/>
            <person name="Mungall K.L."/>
            <person name="Oliver K."/>
            <person name="Price C."/>
            <person name="Quail M.A."/>
            <person name="Urushihara H."/>
            <person name="Hernandez J."/>
            <person name="Rabbinowitsch E."/>
            <person name="Steffen D."/>
            <person name="Sanders M."/>
            <person name="Ma J."/>
            <person name="Kohara Y."/>
            <person name="Sharp S."/>
            <person name="Simmonds M.N."/>
            <person name="Spiegler S."/>
            <person name="Tivey A."/>
            <person name="Sugano S."/>
            <person name="White B."/>
            <person name="Walker D."/>
            <person name="Woodward J.R."/>
            <person name="Winckler T."/>
            <person name="Tanaka Y."/>
            <person name="Shaulsky G."/>
            <person name="Schleicher M."/>
            <person name="Weinstock G.M."/>
            <person name="Rosenthal A."/>
            <person name="Cox E.C."/>
            <person name="Chisholm R.L."/>
            <person name="Gibbs R.A."/>
            <person name="Loomis W.F."/>
            <person name="Platzer M."/>
            <person name="Kay R.R."/>
            <person name="Williams J.G."/>
            <person name="Dear P.H."/>
            <person name="Noegel A.A."/>
            <person name="Barrell B.G."/>
            <person name="Kuspa A."/>
        </authorList>
    </citation>
    <scope>NUCLEOTIDE SEQUENCE [LARGE SCALE GENOMIC DNA]</scope>
    <source>
        <strain>AX4</strain>
    </source>
</reference>
<gene>
    <name type="primary">upf1</name>
    <name type="ORF">DDB_G0288923</name>
</gene>
<evidence type="ECO:0000250" key="1"/>
<evidence type="ECO:0000250" key="2">
    <source>
        <dbReference type="UniProtKB" id="Q92900"/>
    </source>
</evidence>
<evidence type="ECO:0000255" key="3"/>
<evidence type="ECO:0000255" key="4">
    <source>
        <dbReference type="PROSITE-ProRule" id="PRU00499"/>
    </source>
</evidence>
<evidence type="ECO:0000255" key="5">
    <source>
        <dbReference type="PROSITE-ProRule" id="PRU01341"/>
    </source>
</evidence>
<evidence type="ECO:0000256" key="6">
    <source>
        <dbReference type="SAM" id="MobiDB-lite"/>
    </source>
</evidence>
<evidence type="ECO:0000305" key="7"/>
<sequence length="1331" mass="151558">MYGFNIGKAENAGLHLDNKKSENNNSSNNELHKVINTINNGFQFKDDDDEDNENNLNNESSSDEENQQQQNNNNNNNKNQFEDDDEDQEEEEYISGDDLNNNGQESDDYEEEEEDDDEDEEEEDEESKKLNYDSFFGANMSHNMDFLNSQNINSQIGLMDPHLHSSQLNFEEPQEEIELPAHACAYCATHELSTVVKCMHPSCGKWFCNGKGKTKSSHIITHLVKSKHKEVALHPESSFGDTTLECFNCGCKNIFLLGFITARTESVVVLLCRDPCASGPSKEVNWDMSSWQPLINGGEKAFCSWLVKTPSQVDSERSRQITIQQILRLEEFWKMDPEATLLDIEAPRSDDEKPASTQLAYKDAYEYREIISPLIELEAKHEKELRESLSQSGISIEWSQGINKRYTATFPFSRSDLEFKVVPGDELKLQFISSTGGVIEWEDTGRVIHIDDENLLSLETKSRCSFDSGPKGSYRMEMVWRSTSSERILSAMKSFAIKEQALSSYLYHALLGHPDIPPAPLDIQLPTNFHLKNLPRLNESQISAVNKVLTAPLSLIQGPPGTGKTVISSFIIHHLVKYVKGNDKVLVCTPSNVAIDQLTGKLHEIGLKVVRLSSKLREEVASPVEHLTLHKQVYKLDQMGDGELGKLRKLKEAFGSLSNEDEKRYIYLRRMMEMAILRKADVICATCVGAGDPRLSQFRFPHILIDESTQASEPECLIPLMMGAKQVILVGDHRQLGPVLLCKKVVDAGLSQSLFERLISLGHHPERLTIQYRMHPSLTEFPSNTSYEGQLVSELSHTDRDSQSKFPWPQPKDPMFFFNCTGSEEISSSGTSFINTTEASICEKIVTKFLELGSLPGQIGIITPYEGQRAYITSHMQKSGKLNLELYKSIEVASVDSFQGREKDYIILSCVRSNDYQGIGFLQDPRRLNVALTRARFGLIILGNAKVLSKDPLWNSLISHFKNKNVLVEGSLANLKQSPVILQKPKKLYGQGKLPIPGQNSNSFNYDREHIDPNIGMNMVYGISNNNINNNSNNINNNNNNNINNNINNNNNQRFNTQDGRYSNSQTSSSSQTYYGSTNSSGNTINSNQNQFFNTPSSYSANTGSSYQYRFQQYQQLQQPQPQQQQQPQQQQQPQQQQQPQQPQQQQPQQQKQYQQQQQQQQQQQQQQQQQQQQQKQQPHQQYQSQKQQQQQQYQQPQQYQQQNQQYHQSQLPPKQYHNQRFNNNNNNNINNNNNNNNNNNNNNNNNNNNNNINNNNSKNQNQNQSPRRSPVVGTLQLHCKFDSQPNNNKHISDPNQPQISNPNMSIPLSQSLSFNDLSQEQFNKSNSRKD</sequence>
<protein>
    <recommendedName>
        <fullName>Regulator of nonsense transcripts 1</fullName>
        <ecNumber evidence="2">3.6.4.12</ecNumber>
        <ecNumber evidence="2">3.6.4.13</ecNumber>
    </recommendedName>
    <alternativeName>
        <fullName>Up-frameshift suppressor 1 homolog</fullName>
    </alternativeName>
</protein>
<feature type="chain" id="PRO_0000375999" description="Regulator of nonsense transcripts 1">
    <location>
        <begin position="1"/>
        <end position="1331"/>
    </location>
</feature>
<feature type="domain" description="Upf1 CH-rich" evidence="5">
    <location>
        <begin position="176"/>
        <end position="336"/>
    </location>
</feature>
<feature type="region of interest" description="Disordered" evidence="6">
    <location>
        <begin position="1"/>
        <end position="129"/>
    </location>
</feature>
<feature type="region of interest" description="C3H" evidence="5">
    <location>
        <begin position="184"/>
        <end position="218"/>
    </location>
</feature>
<feature type="region of interest" description="CC/SHH/C" evidence="5">
    <location>
        <begin position="198"/>
        <end position="228"/>
    </location>
</feature>
<feature type="region of interest" description="C4" evidence="5">
    <location>
        <begin position="246"/>
        <end position="276"/>
    </location>
</feature>
<feature type="region of interest" description="Disordered" evidence="6">
    <location>
        <begin position="1032"/>
        <end position="1150"/>
    </location>
</feature>
<feature type="region of interest" description="Disordered" evidence="6">
    <location>
        <begin position="1180"/>
        <end position="1310"/>
    </location>
</feature>
<feature type="coiled-coil region" evidence="3">
    <location>
        <begin position="54"/>
        <end position="131"/>
    </location>
</feature>
<feature type="coiled-coil region" evidence="3">
    <location>
        <begin position="1149"/>
        <end position="1178"/>
    </location>
</feature>
<feature type="short sequence motif" description="[ST]-Q motif 1">
    <location>
        <begin position="1174"/>
        <end position="1175"/>
    </location>
</feature>
<feature type="short sequence motif" description="[ST]-Q motif 2">
    <location>
        <begin position="1189"/>
        <end position="1190"/>
    </location>
</feature>
<feature type="compositionally biased region" description="Low complexity" evidence="6">
    <location>
        <begin position="67"/>
        <end position="79"/>
    </location>
</feature>
<feature type="compositionally biased region" description="Acidic residues" evidence="6">
    <location>
        <begin position="82"/>
        <end position="95"/>
    </location>
</feature>
<feature type="compositionally biased region" description="Acidic residues" evidence="6">
    <location>
        <begin position="105"/>
        <end position="125"/>
    </location>
</feature>
<feature type="compositionally biased region" description="Low complexity" evidence="6">
    <location>
        <begin position="1032"/>
        <end position="1052"/>
    </location>
</feature>
<feature type="compositionally biased region" description="Low complexity" evidence="6">
    <location>
        <begin position="1062"/>
        <end position="1091"/>
    </location>
</feature>
<feature type="compositionally biased region" description="Polar residues" evidence="6">
    <location>
        <begin position="1092"/>
        <end position="1111"/>
    </location>
</feature>
<feature type="compositionally biased region" description="Low complexity" evidence="6">
    <location>
        <begin position="1112"/>
        <end position="1150"/>
    </location>
</feature>
<feature type="compositionally biased region" description="Low complexity" evidence="6">
    <location>
        <begin position="1180"/>
        <end position="1214"/>
    </location>
</feature>
<feature type="compositionally biased region" description="Low complexity" evidence="6">
    <location>
        <begin position="1223"/>
        <end position="1257"/>
    </location>
</feature>
<feature type="compositionally biased region" description="Polar residues" evidence="6">
    <location>
        <begin position="1258"/>
        <end position="1268"/>
    </location>
</feature>
<feature type="compositionally biased region" description="Polar residues" evidence="6">
    <location>
        <begin position="1284"/>
        <end position="1310"/>
    </location>
</feature>
<feature type="binding site" evidence="5">
    <location>
        <position position="184"/>
    </location>
    <ligand>
        <name>Zn(2+)</name>
        <dbReference type="ChEBI" id="CHEBI:29105"/>
        <label>1</label>
    </ligand>
</feature>
<feature type="binding site" evidence="5">
    <location>
        <position position="187"/>
    </location>
    <ligand>
        <name>Zn(2+)</name>
        <dbReference type="ChEBI" id="CHEBI:29105"/>
        <label>1</label>
    </ligand>
</feature>
<feature type="binding site" evidence="5">
    <location>
        <position position="198"/>
    </location>
    <ligand>
        <name>Zn(2+)</name>
        <dbReference type="ChEBI" id="CHEBI:29105"/>
        <label>2</label>
    </ligand>
</feature>
<feature type="binding site" evidence="5">
    <location>
        <position position="203"/>
    </location>
    <ligand>
        <name>Zn(2+)</name>
        <dbReference type="ChEBI" id="CHEBI:29105"/>
        <label>2</label>
    </ligand>
</feature>
<feature type="binding site" evidence="5">
    <location>
        <position position="208"/>
    </location>
    <ligand>
        <name>Zn(2+)</name>
        <dbReference type="ChEBI" id="CHEBI:29105"/>
        <label>1</label>
    </ligand>
</feature>
<feature type="binding site" evidence="5">
    <location>
        <position position="218"/>
    </location>
    <ligand>
        <name>Zn(2+)</name>
        <dbReference type="ChEBI" id="CHEBI:29105"/>
        <label>1</label>
    </ligand>
</feature>
<feature type="binding site" evidence="5">
    <location>
        <position position="222"/>
    </location>
    <ligand>
        <name>Zn(2+)</name>
        <dbReference type="ChEBI" id="CHEBI:29105"/>
        <label>2</label>
    </ligand>
</feature>
<feature type="binding site" evidence="5">
    <location>
        <position position="228"/>
    </location>
    <ligand>
        <name>Zn(2+)</name>
        <dbReference type="ChEBI" id="CHEBI:29105"/>
        <label>2</label>
    </ligand>
</feature>
<feature type="binding site" evidence="5">
    <location>
        <position position="246"/>
    </location>
    <ligand>
        <name>Zn(2+)</name>
        <dbReference type="ChEBI" id="CHEBI:29105"/>
        <label>3</label>
    </ligand>
</feature>
<feature type="binding site" evidence="5">
    <location>
        <position position="249"/>
    </location>
    <ligand>
        <name>Zn(2+)</name>
        <dbReference type="ChEBI" id="CHEBI:29105"/>
        <label>3</label>
    </ligand>
</feature>
<feature type="binding site" evidence="5">
    <location>
        <position position="272"/>
    </location>
    <ligand>
        <name>Zn(2+)</name>
        <dbReference type="ChEBI" id="CHEBI:29105"/>
        <label>3</label>
    </ligand>
</feature>
<feature type="binding site" evidence="5">
    <location>
        <position position="276"/>
    </location>
    <ligand>
        <name>Zn(2+)</name>
        <dbReference type="ChEBI" id="CHEBI:29105"/>
        <label>3</label>
    </ligand>
</feature>
<feature type="binding site" evidence="2">
    <location>
        <position position="541"/>
    </location>
    <ligand>
        <name>ATP</name>
        <dbReference type="ChEBI" id="CHEBI:30616"/>
    </ligand>
</feature>
<feature type="binding site" evidence="4">
    <location>
        <begin position="558"/>
        <end position="565"/>
    </location>
    <ligand>
        <name>ATP</name>
        <dbReference type="ChEBI" id="CHEBI:30616"/>
    </ligand>
</feature>
<feature type="binding site" evidence="2">
    <location>
        <position position="735"/>
    </location>
    <ligand>
        <name>ATP</name>
        <dbReference type="ChEBI" id="CHEBI:30616"/>
    </ligand>
</feature>
<feature type="binding site" evidence="2">
    <location>
        <position position="772"/>
    </location>
    <ligand>
        <name>ATP</name>
        <dbReference type="ChEBI" id="CHEBI:30616"/>
    </ligand>
</feature>
<feature type="binding site" evidence="2">
    <location>
        <position position="902"/>
    </location>
    <ligand>
        <name>ATP</name>
        <dbReference type="ChEBI" id="CHEBI:30616"/>
    </ligand>
</feature>
<dbReference type="EC" id="3.6.4.12" evidence="2"/>
<dbReference type="EC" id="3.6.4.13" evidence="2"/>
<dbReference type="EMBL" id="AAFI02000126">
    <property type="protein sequence ID" value="EAL62985.1"/>
    <property type="molecule type" value="Genomic_DNA"/>
</dbReference>
<dbReference type="RefSeq" id="XP_636490.1">
    <property type="nucleotide sequence ID" value="XM_631398.1"/>
</dbReference>
<dbReference type="SMR" id="Q54I89"/>
<dbReference type="FunCoup" id="Q54I89">
    <property type="interactions" value="1075"/>
</dbReference>
<dbReference type="STRING" id="44689.Q54I89"/>
<dbReference type="PaxDb" id="44689-DDB0233746"/>
<dbReference type="EnsemblProtists" id="EAL62985">
    <property type="protein sequence ID" value="EAL62985"/>
    <property type="gene ID" value="DDB_G0288923"/>
</dbReference>
<dbReference type="GeneID" id="8626873"/>
<dbReference type="KEGG" id="ddi:DDB_G0288923"/>
<dbReference type="dictyBase" id="DDB_G0288923">
    <property type="gene designation" value="upf1"/>
</dbReference>
<dbReference type="VEuPathDB" id="AmoebaDB:DDB_G0288923"/>
<dbReference type="eggNOG" id="KOG1802">
    <property type="taxonomic scope" value="Eukaryota"/>
</dbReference>
<dbReference type="HOGENOM" id="CLU_001666_4_1_1"/>
<dbReference type="InParanoid" id="Q54I89"/>
<dbReference type="OMA" id="VCKKAAN"/>
<dbReference type="PhylomeDB" id="Q54I89"/>
<dbReference type="Reactome" id="R-DDI-975956">
    <property type="pathway name" value="Nonsense Mediated Decay (NMD) independent of the Exon Junction Complex (EJC)"/>
</dbReference>
<dbReference type="Reactome" id="R-DDI-975957">
    <property type="pathway name" value="Nonsense Mediated Decay (NMD) enhanced by the Exon Junction Complex (EJC)"/>
</dbReference>
<dbReference type="PRO" id="PR:Q54I89"/>
<dbReference type="Proteomes" id="UP000002195">
    <property type="component" value="Chromosome 5"/>
</dbReference>
<dbReference type="GO" id="GO:0005737">
    <property type="term" value="C:cytoplasm"/>
    <property type="evidence" value="ECO:0000250"/>
    <property type="project" value="dictyBase"/>
</dbReference>
<dbReference type="GO" id="GO:0005524">
    <property type="term" value="F:ATP binding"/>
    <property type="evidence" value="ECO:0007669"/>
    <property type="project" value="UniProtKB-KW"/>
</dbReference>
<dbReference type="GO" id="GO:0016887">
    <property type="term" value="F:ATP hydrolysis activity"/>
    <property type="evidence" value="ECO:0000250"/>
    <property type="project" value="UniProtKB"/>
</dbReference>
<dbReference type="GO" id="GO:0036121">
    <property type="term" value="F:double-stranded DNA helicase activity"/>
    <property type="evidence" value="ECO:0000250"/>
    <property type="project" value="UniProtKB"/>
</dbReference>
<dbReference type="GO" id="GO:0043024">
    <property type="term" value="F:ribosomal small subunit binding"/>
    <property type="evidence" value="ECO:0000250"/>
    <property type="project" value="dictyBase"/>
</dbReference>
<dbReference type="GO" id="GO:0003723">
    <property type="term" value="F:RNA binding"/>
    <property type="evidence" value="ECO:0000318"/>
    <property type="project" value="GO_Central"/>
</dbReference>
<dbReference type="GO" id="GO:0003724">
    <property type="term" value="F:RNA helicase activity"/>
    <property type="evidence" value="ECO:0000318"/>
    <property type="project" value="GO_Central"/>
</dbReference>
<dbReference type="GO" id="GO:0008270">
    <property type="term" value="F:zinc ion binding"/>
    <property type="evidence" value="ECO:0007669"/>
    <property type="project" value="UniProtKB-KW"/>
</dbReference>
<dbReference type="GO" id="GO:0000184">
    <property type="term" value="P:nuclear-transcribed mRNA catabolic process, nonsense-mediated decay"/>
    <property type="evidence" value="ECO:0000250"/>
    <property type="project" value="dictyBase"/>
</dbReference>
<dbReference type="CDD" id="cd21407">
    <property type="entry name" value="1B_UPF1-like"/>
    <property type="match status" value="1"/>
</dbReference>
<dbReference type="CDD" id="cd18039">
    <property type="entry name" value="DEXXQc_UPF1"/>
    <property type="match status" value="1"/>
</dbReference>
<dbReference type="CDD" id="cd18808">
    <property type="entry name" value="SF1_C_Upf1"/>
    <property type="match status" value="1"/>
</dbReference>
<dbReference type="CDD" id="cd21400">
    <property type="entry name" value="ZBD_UPF1-like"/>
    <property type="match status" value="1"/>
</dbReference>
<dbReference type="FunFam" id="3.40.50.300:FF:000097">
    <property type="entry name" value="Regulator of nonsense transcripts 1"/>
    <property type="match status" value="1"/>
</dbReference>
<dbReference type="Gene3D" id="2.40.30.230">
    <property type="match status" value="1"/>
</dbReference>
<dbReference type="Gene3D" id="6.10.140.1240">
    <property type="match status" value="1"/>
</dbReference>
<dbReference type="Gene3D" id="3.40.50.300">
    <property type="entry name" value="P-loop containing nucleotide triphosphate hydrolases"/>
    <property type="match status" value="2"/>
</dbReference>
<dbReference type="InterPro" id="IPR045055">
    <property type="entry name" value="DNA2/NAM7-like"/>
</dbReference>
<dbReference type="InterPro" id="IPR041679">
    <property type="entry name" value="DNA2/NAM7-like_C"/>
</dbReference>
<dbReference type="InterPro" id="IPR041677">
    <property type="entry name" value="DNA2/NAM7_AAA_11"/>
</dbReference>
<dbReference type="InterPro" id="IPR027417">
    <property type="entry name" value="P-loop_NTPase"/>
</dbReference>
<dbReference type="InterPro" id="IPR047187">
    <property type="entry name" value="SF1_C_Upf1"/>
</dbReference>
<dbReference type="InterPro" id="IPR040812">
    <property type="entry name" value="UPF1_1B_dom"/>
</dbReference>
<dbReference type="InterPro" id="IPR018999">
    <property type="entry name" value="UPF1_CH/ZBD"/>
</dbReference>
<dbReference type="PANTHER" id="PTHR10887">
    <property type="entry name" value="DNA2/NAM7 HELICASE FAMILY"/>
    <property type="match status" value="1"/>
</dbReference>
<dbReference type="PANTHER" id="PTHR10887:SF364">
    <property type="entry name" value="REGULATOR OF NONSENSE TRANSCRIPTS 1"/>
    <property type="match status" value="1"/>
</dbReference>
<dbReference type="Pfam" id="PF13086">
    <property type="entry name" value="AAA_11"/>
    <property type="match status" value="2"/>
</dbReference>
<dbReference type="Pfam" id="PF13087">
    <property type="entry name" value="AAA_12"/>
    <property type="match status" value="1"/>
</dbReference>
<dbReference type="Pfam" id="PF18141">
    <property type="entry name" value="UPF1_1B_dom"/>
    <property type="match status" value="1"/>
</dbReference>
<dbReference type="Pfam" id="PF09416">
    <property type="entry name" value="UPF1_Zn_bind"/>
    <property type="match status" value="1"/>
</dbReference>
<dbReference type="SUPFAM" id="SSF52540">
    <property type="entry name" value="P-loop containing nucleoside triphosphate hydrolases"/>
    <property type="match status" value="1"/>
</dbReference>
<dbReference type="PROSITE" id="PS51997">
    <property type="entry name" value="UPF1_CH_RICH"/>
    <property type="match status" value="1"/>
</dbReference>
<proteinExistence type="inferred from homology"/>
<accession>Q54I89</accession>